<organism>
    <name type="scientific">Staphylococcus hyicus</name>
    <dbReference type="NCBI Taxonomy" id="1284"/>
    <lineage>
        <taxon>Bacteria</taxon>
        <taxon>Bacillati</taxon>
        <taxon>Bacillota</taxon>
        <taxon>Bacilli</taxon>
        <taxon>Bacillales</taxon>
        <taxon>Staphylococcaceae</taxon>
        <taxon>Staphylococcus</taxon>
    </lineage>
</organism>
<dbReference type="EC" id="3.1.1.3"/>
<dbReference type="EC" id="3.1.1.32"/>
<dbReference type="EMBL" id="X02844">
    <property type="protein sequence ID" value="CAA26602.1"/>
    <property type="molecule type" value="Genomic_DNA"/>
</dbReference>
<dbReference type="PIR" id="A24075">
    <property type="entry name" value="A24075"/>
</dbReference>
<dbReference type="PDB" id="2HIH">
    <property type="method" value="X-ray"/>
    <property type="resolution" value="2.86 A"/>
    <property type="chains" value="A/B=222-641"/>
</dbReference>
<dbReference type="PDBsum" id="2HIH"/>
<dbReference type="SMR" id="P04635"/>
<dbReference type="STRING" id="1284.SHYC_01855"/>
<dbReference type="ESTHER" id="stahy-lipas">
    <property type="family name" value="Bacterial_lip_FamI.6"/>
</dbReference>
<dbReference type="EvolutionaryTrace" id="P04635"/>
<dbReference type="GO" id="GO:0005576">
    <property type="term" value="C:extracellular region"/>
    <property type="evidence" value="ECO:0000314"/>
    <property type="project" value="UniProtKB"/>
</dbReference>
<dbReference type="GO" id="GO:0005509">
    <property type="term" value="F:calcium ion binding"/>
    <property type="evidence" value="ECO:0000314"/>
    <property type="project" value="UniProtKB"/>
</dbReference>
<dbReference type="GO" id="GO:0008970">
    <property type="term" value="F:phospholipase A1 activity"/>
    <property type="evidence" value="ECO:0000314"/>
    <property type="project" value="UniProtKB"/>
</dbReference>
<dbReference type="GO" id="GO:0004620">
    <property type="term" value="F:phospholipase activity"/>
    <property type="evidence" value="ECO:0000314"/>
    <property type="project" value="UniProtKB"/>
</dbReference>
<dbReference type="GO" id="GO:0004806">
    <property type="term" value="F:triacylglycerol lipase activity"/>
    <property type="evidence" value="ECO:0000314"/>
    <property type="project" value="UniProtKB"/>
</dbReference>
<dbReference type="GO" id="GO:0016042">
    <property type="term" value="P:lipid catabolic process"/>
    <property type="evidence" value="ECO:0000314"/>
    <property type="project" value="UniProtKB"/>
</dbReference>
<dbReference type="GO" id="GO:0034638">
    <property type="term" value="P:phosphatidylcholine catabolic process"/>
    <property type="evidence" value="ECO:0000314"/>
    <property type="project" value="UniProtKB"/>
</dbReference>
<dbReference type="GO" id="GO:0019433">
    <property type="term" value="P:triglyceride catabolic process"/>
    <property type="evidence" value="ECO:0000314"/>
    <property type="project" value="UniProtKB"/>
</dbReference>
<dbReference type="FunFam" id="3.40.50.1820:FF:000656">
    <property type="entry name" value="Lipase"/>
    <property type="match status" value="1"/>
</dbReference>
<dbReference type="Gene3D" id="3.40.50.1820">
    <property type="entry name" value="alpha/beta hydrolase"/>
    <property type="match status" value="1"/>
</dbReference>
<dbReference type="InterPro" id="IPR029058">
    <property type="entry name" value="AB_hydrolase_fold"/>
</dbReference>
<dbReference type="InterPro" id="IPR056304">
    <property type="entry name" value="Lip-like_C"/>
</dbReference>
<dbReference type="InterPro" id="IPR005877">
    <property type="entry name" value="YSIRK_signal_dom"/>
</dbReference>
<dbReference type="NCBIfam" id="NF047351">
    <property type="entry name" value="lipase_YSIRK_Sa"/>
    <property type="match status" value="1"/>
</dbReference>
<dbReference type="NCBIfam" id="TIGR01168">
    <property type="entry name" value="YSIRK_signal"/>
    <property type="match status" value="1"/>
</dbReference>
<dbReference type="PANTHER" id="PTHR34043">
    <property type="entry name" value="ALPHA/BETA-HYDROLASES SUPERFAMILY PROTEIN"/>
    <property type="match status" value="1"/>
</dbReference>
<dbReference type="PANTHER" id="PTHR34043:SF3">
    <property type="entry name" value="ALPHA_BETA-HYDROLASES SUPERFAMILY PROTEIN"/>
    <property type="match status" value="1"/>
</dbReference>
<dbReference type="Pfam" id="PF24708">
    <property type="entry name" value="Lip_C"/>
    <property type="match status" value="1"/>
</dbReference>
<dbReference type="Pfam" id="PF04650">
    <property type="entry name" value="YSIRK_signal"/>
    <property type="match status" value="1"/>
</dbReference>
<dbReference type="SUPFAM" id="SSF53474">
    <property type="entry name" value="alpha/beta-Hydrolases"/>
    <property type="match status" value="1"/>
</dbReference>
<dbReference type="PROSITE" id="PS00120">
    <property type="entry name" value="LIPASE_SER"/>
    <property type="match status" value="1"/>
</dbReference>
<name>LIP_STAHY</name>
<feature type="signal peptide" evidence="4">
    <location>
        <begin position="1"/>
        <end position="38"/>
    </location>
</feature>
<feature type="chain" id="PRO_0000017758" description="Lipase 86 kDa form">
    <location>
        <begin position="39"/>
        <end position="641"/>
    </location>
</feature>
<feature type="chain" id="PRO_0000017759" description="Lipase 46 kDa form">
    <location>
        <begin position="246"/>
        <end position="641"/>
    </location>
</feature>
<feature type="region of interest" description="Disordered" evidence="2">
    <location>
        <begin position="41"/>
        <end position="174"/>
    </location>
</feature>
<feature type="region of interest" description="Disordered" evidence="2">
    <location>
        <begin position="206"/>
        <end position="246"/>
    </location>
</feature>
<feature type="compositionally biased region" description="Low complexity" evidence="2">
    <location>
        <begin position="53"/>
        <end position="64"/>
    </location>
</feature>
<feature type="compositionally biased region" description="Basic and acidic residues" evidence="2">
    <location>
        <begin position="73"/>
        <end position="94"/>
    </location>
</feature>
<feature type="compositionally biased region" description="Polar residues" evidence="2">
    <location>
        <begin position="95"/>
        <end position="106"/>
    </location>
</feature>
<feature type="compositionally biased region" description="Polar residues" evidence="2">
    <location>
        <begin position="127"/>
        <end position="139"/>
    </location>
</feature>
<feature type="compositionally biased region" description="Basic and acidic residues" evidence="2">
    <location>
        <begin position="140"/>
        <end position="165"/>
    </location>
</feature>
<feature type="compositionally biased region" description="Polar residues" evidence="2">
    <location>
        <begin position="227"/>
        <end position="239"/>
    </location>
</feature>
<feature type="active site" description="Nucleophile" evidence="3">
    <location>
        <position position="369"/>
    </location>
</feature>
<feature type="active site" description="Charge relay system" evidence="1 3">
    <location>
        <position position="559"/>
    </location>
</feature>
<feature type="active site" description="Charge relay system" evidence="1 3">
    <location>
        <position position="600"/>
    </location>
</feature>
<feature type="binding site" evidence="3">
    <location>
        <position position="535"/>
    </location>
    <ligand>
        <name>Ca(2+)</name>
        <dbReference type="ChEBI" id="CHEBI:29108"/>
    </ligand>
</feature>
<feature type="binding site" evidence="3">
    <location>
        <position position="599"/>
    </location>
    <ligand>
        <name>Ca(2+)</name>
        <dbReference type="ChEBI" id="CHEBI:29108"/>
    </ligand>
</feature>
<feature type="binding site" evidence="3">
    <location>
        <position position="602"/>
    </location>
    <ligand>
        <name>Ca(2+)</name>
        <dbReference type="ChEBI" id="CHEBI:29108"/>
    </ligand>
</feature>
<feature type="binding site" evidence="3">
    <location>
        <position position="607"/>
    </location>
    <ligand>
        <name>Ca(2+)</name>
        <dbReference type="ChEBI" id="CHEBI:29108"/>
    </ligand>
</feature>
<feature type="binding site" evidence="3">
    <location>
        <position position="610"/>
    </location>
    <ligand>
        <name>Ca(2+)</name>
        <dbReference type="ChEBI" id="CHEBI:29108"/>
    </ligand>
</feature>
<feature type="strand" evidence="6">
    <location>
        <begin position="265"/>
        <end position="268"/>
    </location>
</feature>
<feature type="helix" evidence="6">
    <location>
        <begin position="276"/>
        <end position="278"/>
    </location>
</feature>
<feature type="turn" evidence="6">
    <location>
        <begin position="285"/>
        <end position="290"/>
    </location>
</feature>
<feature type="helix" evidence="6">
    <location>
        <begin position="293"/>
        <end position="299"/>
    </location>
</feature>
<feature type="strand" evidence="6">
    <location>
        <begin position="304"/>
        <end position="307"/>
    </location>
</feature>
<feature type="strand" evidence="6">
    <location>
        <begin position="311"/>
        <end position="313"/>
    </location>
</feature>
<feature type="helix" evidence="6">
    <location>
        <begin position="315"/>
        <end position="327"/>
    </location>
</feature>
<feature type="strand" evidence="6">
    <location>
        <begin position="329"/>
        <end position="332"/>
    </location>
</feature>
<feature type="helix" evidence="6">
    <location>
        <begin position="335"/>
        <end position="341"/>
    </location>
</feature>
<feature type="strand" evidence="6">
    <location>
        <begin position="345"/>
        <end position="350"/>
    </location>
</feature>
<feature type="strand" evidence="6">
    <location>
        <begin position="363"/>
        <end position="368"/>
    </location>
</feature>
<feature type="helix" evidence="6">
    <location>
        <begin position="371"/>
        <end position="384"/>
    </location>
</feature>
<feature type="helix" evidence="6">
    <location>
        <begin position="387"/>
        <end position="396"/>
    </location>
</feature>
<feature type="helix" evidence="6">
    <location>
        <begin position="402"/>
        <end position="405"/>
    </location>
</feature>
<feature type="strand" evidence="6">
    <location>
        <begin position="412"/>
        <end position="419"/>
    </location>
</feature>
<feature type="helix" evidence="6">
    <location>
        <begin position="426"/>
        <end position="429"/>
    </location>
</feature>
<feature type="turn" evidence="6">
    <location>
        <begin position="430"/>
        <end position="433"/>
    </location>
</feature>
<feature type="helix" evidence="6">
    <location>
        <begin position="435"/>
        <end position="450"/>
    </location>
</feature>
<feature type="helix" evidence="6">
    <location>
        <begin position="459"/>
        <end position="461"/>
    </location>
</feature>
<feature type="helix" evidence="6">
    <location>
        <begin position="471"/>
        <end position="480"/>
    </location>
</feature>
<feature type="helix" evidence="6">
    <location>
        <begin position="482"/>
        <end position="484"/>
    </location>
</feature>
<feature type="helix" evidence="6">
    <location>
        <begin position="490"/>
        <end position="493"/>
    </location>
</feature>
<feature type="helix" evidence="6">
    <location>
        <begin position="496"/>
        <end position="505"/>
    </location>
</feature>
<feature type="strand" evidence="6">
    <location>
        <begin position="512"/>
        <end position="517"/>
    </location>
</feature>
<feature type="strand" evidence="6">
    <location>
        <begin position="522"/>
        <end position="524"/>
    </location>
</feature>
<feature type="helix" evidence="6">
    <location>
        <begin position="526"/>
        <end position="528"/>
    </location>
</feature>
<feature type="strand" evidence="6">
    <location>
        <begin position="530"/>
        <end position="532"/>
    </location>
</feature>
<feature type="helix" evidence="6">
    <location>
        <begin position="538"/>
        <end position="540"/>
    </location>
</feature>
<feature type="helix" evidence="6">
    <location>
        <begin position="541"/>
        <end position="547"/>
    </location>
</feature>
<feature type="helix" evidence="6">
    <location>
        <begin position="553"/>
        <end position="555"/>
    </location>
</feature>
<feature type="strand" evidence="6">
    <location>
        <begin position="558"/>
        <end position="563"/>
    </location>
</feature>
<feature type="helix" evidence="6">
    <location>
        <begin position="564"/>
        <end position="568"/>
    </location>
</feature>
<feature type="strand" evidence="6">
    <location>
        <begin position="575"/>
        <end position="577"/>
    </location>
</feature>
<feature type="strand" evidence="6">
    <location>
        <begin position="586"/>
        <end position="591"/>
    </location>
</feature>
<feature type="helix" evidence="6">
    <location>
        <begin position="602"/>
        <end position="604"/>
    </location>
</feature>
<feature type="strand" evidence="6">
    <location>
        <begin position="611"/>
        <end position="613"/>
    </location>
</feature>
<feature type="helix" evidence="6">
    <location>
        <begin position="615"/>
        <end position="637"/>
    </location>
</feature>
<proteinExistence type="evidence at protein level"/>
<comment type="function">
    <text evidence="4">Has a broad substrate specificity hydrolyzing a variety of triglycerides and phosphatidylcholines.</text>
</comment>
<comment type="catalytic activity">
    <reaction evidence="4">
        <text>a triacylglycerol + H2O = a diacylglycerol + a fatty acid + H(+)</text>
        <dbReference type="Rhea" id="RHEA:12044"/>
        <dbReference type="ChEBI" id="CHEBI:15377"/>
        <dbReference type="ChEBI" id="CHEBI:15378"/>
        <dbReference type="ChEBI" id="CHEBI:17855"/>
        <dbReference type="ChEBI" id="CHEBI:18035"/>
        <dbReference type="ChEBI" id="CHEBI:28868"/>
        <dbReference type="EC" id="3.1.1.3"/>
    </reaction>
</comment>
<comment type="catalytic activity">
    <reaction evidence="4">
        <text>a 1,2-diacyl-sn-glycero-3-phosphocholine + H2O = a 2-acyl-sn-glycero-3-phosphocholine + a fatty acid + H(+)</text>
        <dbReference type="Rhea" id="RHEA:18689"/>
        <dbReference type="ChEBI" id="CHEBI:15377"/>
        <dbReference type="ChEBI" id="CHEBI:15378"/>
        <dbReference type="ChEBI" id="CHEBI:28868"/>
        <dbReference type="ChEBI" id="CHEBI:57643"/>
        <dbReference type="ChEBI" id="CHEBI:57875"/>
        <dbReference type="EC" id="3.1.1.32"/>
    </reaction>
</comment>
<comment type="cofactor">
    <cofactor evidence="4">
        <name>Ca(2+)</name>
        <dbReference type="ChEBI" id="CHEBI:29108"/>
    </cofactor>
</comment>
<comment type="biophysicochemical properties">
    <phDependence>
        <text evidence="4">Optimum pH around 9.</text>
    </phDependence>
</comment>
<comment type="subcellular location">
    <subcellularLocation>
        <location evidence="4">Secreted</location>
    </subcellularLocation>
</comment>
<comment type="similarity">
    <text evidence="5">Belongs to the AB hydrolase superfamily. Lipase family.</text>
</comment>
<accession>P04635</accession>
<protein>
    <recommendedName>
        <fullName>Lipase</fullName>
        <ecNumber>3.1.1.3</ecNumber>
        <ecNumber>3.1.1.32</ecNumber>
    </recommendedName>
    <alternativeName>
        <fullName>Phospholipase A1</fullName>
    </alternativeName>
    <alternativeName>
        <fullName>Triacylglycerol lipase</fullName>
    </alternativeName>
    <component>
        <recommendedName>
            <fullName>Lipase 86 kDa form</fullName>
        </recommendedName>
    </component>
    <component>
        <recommendedName>
            <fullName>Lipase 46 kDa form</fullName>
        </recommendedName>
    </component>
</protein>
<evidence type="ECO:0000255" key="1">
    <source>
        <dbReference type="PROSITE-ProRule" id="PRU10037"/>
    </source>
</evidence>
<evidence type="ECO:0000256" key="2">
    <source>
        <dbReference type="SAM" id="MobiDB-lite"/>
    </source>
</evidence>
<evidence type="ECO:0000269" key="3">
    <source>
    </source>
</evidence>
<evidence type="ECO:0000269" key="4">
    <source>
    </source>
</evidence>
<evidence type="ECO:0000305" key="5"/>
<evidence type="ECO:0007829" key="6">
    <source>
        <dbReference type="PDB" id="2HIH"/>
    </source>
</evidence>
<gene>
    <name type="primary">lip</name>
</gene>
<sequence length="641" mass="71224">MKETKHQHTFSIRKSAYGAASVMVASCIFVIGGGVAEANDSTTQTTTPLEVAQTSQQETHTHQTPVTSLHTATPEHVDDSKEATPLPEKAESPKTEVTVQPSSHTQEVPALHKKTQQQPAYKDKTVPESTIASKSVESNKATENEMSPVEHHASNVEKREDRLETNETTPPSVDREFSHKIINNTHVNPKTDGQTNVNVDTKTIDTVSPKDDRIDTAQPKQVDVPKENTTAQNKFTSQASDKKPTVKAAPEAVQNPENPKNKDPFVFVHGFTGFVGEVAAKGENHWGGTKANLRNHLRKAGYETYEASVSALASNHERAVELYYYLKGGRVDYGAAHSEKYGHERYGKTYEGVLKDWKPGHPVHFIGHSMGGQTIRLLEHYLRFGDKAEIAYQQQHGGIISELFKGGQDNMVTSITTIATPHNGTHASDDIGNTPTIRNILYSFAQMSSHLGTIDFGMDHWGFKRKDGESLTDYNKRIAESKIWDSEDTGLYDLTREGAEKINQKTELNPNIYYKTYTGVATHETQLGKHIADLGMEFTKILTGNYIGSVDDILWRPNDGLVSEISSQHPSDEKNISVDENSELHKGTWQVMPTMKGWDHSDFIGNDALDTKHSAIELTNFYHSISDYLMRIEKAESTKNA</sequence>
<keyword id="KW-0002">3D-structure</keyword>
<keyword id="KW-0106">Calcium</keyword>
<keyword id="KW-0903">Direct protein sequencing</keyword>
<keyword id="KW-0378">Hydrolase</keyword>
<keyword id="KW-0442">Lipid degradation</keyword>
<keyword id="KW-0443">Lipid metabolism</keyword>
<keyword id="KW-0479">Metal-binding</keyword>
<keyword id="KW-0964">Secreted</keyword>
<keyword id="KW-0732">Signal</keyword>
<reference key="1">
    <citation type="journal article" date="1985" name="Nucleic Acids Res.">
        <title>Complete nucleotide sequence of the lipase gene from Staphylococcus hyicus cloned in Staphylococcus carnosus.</title>
        <authorList>
            <person name="Goetz F."/>
            <person name="Popp F."/>
            <person name="Korn E."/>
            <person name="Schleifer K.H."/>
        </authorList>
    </citation>
    <scope>NUCLEOTIDE SEQUENCE [GENOMIC DNA]</scope>
</reference>
<reference key="2">
    <citation type="journal article" date="1989" name="Biochemistry">
        <title>Purification and substrate specificity of Staphylococcus hyicus lipase.</title>
        <authorList>
            <person name="van Oort M.G."/>
            <person name="Deveer A.M.T.J."/>
            <person name="Dijkman R."/>
            <person name="Tjeenk M.L."/>
            <person name="Verheij H.M."/>
            <person name="de Haas G.H."/>
            <person name="Wenzig E."/>
            <person name="Gotz F."/>
        </authorList>
    </citation>
    <scope>PROTEIN SEQUENCE OF 39-48 AND 246-251</scope>
    <scope>FUNCTION</scope>
    <scope>CATALYTIC ACTIVITY</scope>
    <scope>SUBSTRATE SPECIFICITY</scope>
    <scope>COFACTOR</scope>
    <scope>BIOPHYSICOCHEMICAL PROPERTIES</scope>
    <scope>SUBCELLULAR LOCATION</scope>
</reference>
<reference key="3">
    <citation type="journal article" date="2007" name="J. Mol. Biol.">
        <title>Structural basis of phospholipase activity of Staphylococcus hyicus lipase.</title>
        <authorList>
            <person name="Tiesinga J.J."/>
            <person name="van Pouderoyen G."/>
            <person name="Nardini M."/>
            <person name="Ransac S."/>
            <person name="Dijkstra B.W."/>
        </authorList>
    </citation>
    <scope>X-RAY CRYSTALLOGRAPHY (2.86 ANGSTROMS) OF 222-641 IN COMPLEX WITH CALCIUM</scope>
    <scope>ACTIVE SITES</scope>
</reference>